<evidence type="ECO:0000255" key="1">
    <source>
        <dbReference type="PROSITE-ProRule" id="PRU00448"/>
    </source>
</evidence>
<evidence type="ECO:0000269" key="2">
    <source>
    </source>
</evidence>
<evidence type="ECO:0000269" key="3">
    <source>
    </source>
</evidence>
<evidence type="ECO:0000269" key="4">
    <source>
    </source>
</evidence>
<evidence type="ECO:0000269" key="5">
    <source>
    </source>
</evidence>
<evidence type="ECO:0000269" key="6">
    <source>
    </source>
</evidence>
<evidence type="ECO:0000269" key="7">
    <source ref="2"/>
</evidence>
<evidence type="ECO:0000269" key="8">
    <source ref="5"/>
</evidence>
<evidence type="ECO:0000305" key="9"/>
<evidence type="ECO:0007829" key="10">
    <source>
        <dbReference type="PDB" id="1PSR"/>
    </source>
</evidence>
<evidence type="ECO:0007829" key="11">
    <source>
        <dbReference type="PDB" id="2WND"/>
    </source>
</evidence>
<protein>
    <recommendedName>
        <fullName>Protein S100-A7</fullName>
    </recommendedName>
    <alternativeName>
        <fullName>Psoriasin</fullName>
    </alternativeName>
    <alternativeName>
        <fullName>S100 calcium-binding protein A7</fullName>
    </alternativeName>
</protein>
<keyword id="KW-0002">3D-structure</keyword>
<keyword id="KW-0007">Acetylation</keyword>
<keyword id="KW-0106">Calcium</keyword>
<keyword id="KW-0963">Cytoplasm</keyword>
<keyword id="KW-0903">Direct protein sequencing</keyword>
<keyword id="KW-1015">Disulfide bond</keyword>
<keyword id="KW-0479">Metal-binding</keyword>
<keyword id="KW-1267">Proteomics identification</keyword>
<keyword id="KW-1185">Reference proteome</keyword>
<keyword id="KW-0677">Repeat</keyword>
<keyword id="KW-0964">Secreted</keyword>
<keyword id="KW-0862">Zinc</keyword>
<proteinExistence type="evidence at protein level"/>
<organism>
    <name type="scientific">Homo sapiens</name>
    <name type="common">Human</name>
    <dbReference type="NCBI Taxonomy" id="9606"/>
    <lineage>
        <taxon>Eukaryota</taxon>
        <taxon>Metazoa</taxon>
        <taxon>Chordata</taxon>
        <taxon>Craniata</taxon>
        <taxon>Vertebrata</taxon>
        <taxon>Euteleostomi</taxon>
        <taxon>Mammalia</taxon>
        <taxon>Eutheria</taxon>
        <taxon>Euarchontoglires</taxon>
        <taxon>Primates</taxon>
        <taxon>Haplorrhini</taxon>
        <taxon>Catarrhini</taxon>
        <taxon>Hominidae</taxon>
        <taxon>Homo</taxon>
    </lineage>
</organism>
<reference key="1">
    <citation type="journal article" date="1991" name="J. Invest. Dermatol.">
        <title>Molecular cloning, occurrence, and expression of a novel partially secreted protein 'psoriasin' that is highly up-regulated in psoriatic skin.</title>
        <authorList>
            <person name="Madsen P."/>
            <person name="Rasmussen H.H."/>
            <person name="Leffers H."/>
            <person name="Honore B."/>
            <person name="Dejgaard K."/>
            <person name="Olsen E."/>
            <person name="Kiil J."/>
            <person name="Walbum E."/>
            <person name="Andersen A.H."/>
            <person name="Basse B."/>
            <person name="Lauridsen J.B."/>
            <person name="Ratz G.P."/>
            <person name="Celis A."/>
            <person name="Vandekerckhove J."/>
            <person name="Celis J.E."/>
        </authorList>
    </citation>
    <scope>NUCLEOTIDE SEQUENCE [MRNA]</scope>
    <scope>VARIANT ASP-28</scope>
    <source>
        <tissue>Keratinocyte</tissue>
    </source>
</reference>
<reference key="2">
    <citation type="submission" date="2004-06" db="EMBL/GenBank/DDBJ databases">
        <title>Cloning of human full open reading frames in Gateway(TM) system entry vector (pDONR201).</title>
        <authorList>
            <person name="Halleck A."/>
            <person name="Ebert L."/>
            <person name="Mkoundinya M."/>
            <person name="Schick M."/>
            <person name="Eisenstein S."/>
            <person name="Neubert P."/>
            <person name="Kstrang K."/>
            <person name="Schatten R."/>
            <person name="Shen B."/>
            <person name="Henze S."/>
            <person name="Mar W."/>
            <person name="Korn B."/>
            <person name="Zuo D."/>
            <person name="Hu Y."/>
            <person name="LaBaer J."/>
        </authorList>
    </citation>
    <scope>NUCLEOTIDE SEQUENCE [LARGE SCALE MRNA]</scope>
    <scope>VARIANT ASP-28</scope>
</reference>
<reference key="3">
    <citation type="journal article" date="2006" name="Nature">
        <title>The DNA sequence and biological annotation of human chromosome 1.</title>
        <authorList>
            <person name="Gregory S.G."/>
            <person name="Barlow K.F."/>
            <person name="McLay K.E."/>
            <person name="Kaul R."/>
            <person name="Swarbreck D."/>
            <person name="Dunham A."/>
            <person name="Scott C.E."/>
            <person name="Howe K.L."/>
            <person name="Woodfine K."/>
            <person name="Spencer C.C.A."/>
            <person name="Jones M.C."/>
            <person name="Gillson C."/>
            <person name="Searle S."/>
            <person name="Zhou Y."/>
            <person name="Kokocinski F."/>
            <person name="McDonald L."/>
            <person name="Evans R."/>
            <person name="Phillips K."/>
            <person name="Atkinson A."/>
            <person name="Cooper R."/>
            <person name="Jones C."/>
            <person name="Hall R.E."/>
            <person name="Andrews T.D."/>
            <person name="Lloyd C."/>
            <person name="Ainscough R."/>
            <person name="Almeida J.P."/>
            <person name="Ambrose K.D."/>
            <person name="Anderson F."/>
            <person name="Andrew R.W."/>
            <person name="Ashwell R.I.S."/>
            <person name="Aubin K."/>
            <person name="Babbage A.K."/>
            <person name="Bagguley C.L."/>
            <person name="Bailey J."/>
            <person name="Beasley H."/>
            <person name="Bethel G."/>
            <person name="Bird C.P."/>
            <person name="Bray-Allen S."/>
            <person name="Brown J.Y."/>
            <person name="Brown A.J."/>
            <person name="Buckley D."/>
            <person name="Burton J."/>
            <person name="Bye J."/>
            <person name="Carder C."/>
            <person name="Chapman J.C."/>
            <person name="Clark S.Y."/>
            <person name="Clarke G."/>
            <person name="Clee C."/>
            <person name="Cobley V."/>
            <person name="Collier R.E."/>
            <person name="Corby N."/>
            <person name="Coville G.J."/>
            <person name="Davies J."/>
            <person name="Deadman R."/>
            <person name="Dunn M."/>
            <person name="Earthrowl M."/>
            <person name="Ellington A.G."/>
            <person name="Errington H."/>
            <person name="Frankish A."/>
            <person name="Frankland J."/>
            <person name="French L."/>
            <person name="Garner P."/>
            <person name="Garnett J."/>
            <person name="Gay L."/>
            <person name="Ghori M.R.J."/>
            <person name="Gibson R."/>
            <person name="Gilby L.M."/>
            <person name="Gillett W."/>
            <person name="Glithero R.J."/>
            <person name="Grafham D.V."/>
            <person name="Griffiths C."/>
            <person name="Griffiths-Jones S."/>
            <person name="Grocock R."/>
            <person name="Hammond S."/>
            <person name="Harrison E.S.I."/>
            <person name="Hart E."/>
            <person name="Haugen E."/>
            <person name="Heath P.D."/>
            <person name="Holmes S."/>
            <person name="Holt K."/>
            <person name="Howden P.J."/>
            <person name="Hunt A.R."/>
            <person name="Hunt S.E."/>
            <person name="Hunter G."/>
            <person name="Isherwood J."/>
            <person name="James R."/>
            <person name="Johnson C."/>
            <person name="Johnson D."/>
            <person name="Joy A."/>
            <person name="Kay M."/>
            <person name="Kershaw J.K."/>
            <person name="Kibukawa M."/>
            <person name="Kimberley A.M."/>
            <person name="King A."/>
            <person name="Knights A.J."/>
            <person name="Lad H."/>
            <person name="Laird G."/>
            <person name="Lawlor S."/>
            <person name="Leongamornlert D.A."/>
            <person name="Lloyd D.M."/>
            <person name="Loveland J."/>
            <person name="Lovell J."/>
            <person name="Lush M.J."/>
            <person name="Lyne R."/>
            <person name="Martin S."/>
            <person name="Mashreghi-Mohammadi M."/>
            <person name="Matthews L."/>
            <person name="Matthews N.S.W."/>
            <person name="McLaren S."/>
            <person name="Milne S."/>
            <person name="Mistry S."/>
            <person name="Moore M.J.F."/>
            <person name="Nickerson T."/>
            <person name="O'Dell C.N."/>
            <person name="Oliver K."/>
            <person name="Palmeiri A."/>
            <person name="Palmer S.A."/>
            <person name="Parker A."/>
            <person name="Patel D."/>
            <person name="Pearce A.V."/>
            <person name="Peck A.I."/>
            <person name="Pelan S."/>
            <person name="Phelps K."/>
            <person name="Phillimore B.J."/>
            <person name="Plumb R."/>
            <person name="Rajan J."/>
            <person name="Raymond C."/>
            <person name="Rouse G."/>
            <person name="Saenphimmachak C."/>
            <person name="Sehra H.K."/>
            <person name="Sheridan E."/>
            <person name="Shownkeen R."/>
            <person name="Sims S."/>
            <person name="Skuce C.D."/>
            <person name="Smith M."/>
            <person name="Steward C."/>
            <person name="Subramanian S."/>
            <person name="Sycamore N."/>
            <person name="Tracey A."/>
            <person name="Tromans A."/>
            <person name="Van Helmond Z."/>
            <person name="Wall M."/>
            <person name="Wallis J.M."/>
            <person name="White S."/>
            <person name="Whitehead S.L."/>
            <person name="Wilkinson J.E."/>
            <person name="Willey D.L."/>
            <person name="Williams H."/>
            <person name="Wilming L."/>
            <person name="Wray P.W."/>
            <person name="Wu Z."/>
            <person name="Coulson A."/>
            <person name="Vaudin M."/>
            <person name="Sulston J.E."/>
            <person name="Durbin R.M."/>
            <person name="Hubbard T."/>
            <person name="Wooster R."/>
            <person name="Dunham I."/>
            <person name="Carter N.P."/>
            <person name="McVean G."/>
            <person name="Ross M.T."/>
            <person name="Harrow J."/>
            <person name="Olson M.V."/>
            <person name="Beck S."/>
            <person name="Rogers J."/>
            <person name="Bentley D.R."/>
        </authorList>
    </citation>
    <scope>NUCLEOTIDE SEQUENCE [LARGE SCALE GENOMIC DNA]</scope>
</reference>
<reference key="4">
    <citation type="journal article" date="2004" name="Genome Res.">
        <title>The status, quality, and expansion of the NIH full-length cDNA project: the Mammalian Gene Collection (MGC).</title>
        <authorList>
            <consortium name="The MGC Project Team"/>
        </authorList>
    </citation>
    <scope>NUCLEOTIDE SEQUENCE [LARGE SCALE MRNA]</scope>
    <scope>VARIANT ASP-28</scope>
    <source>
        <tissue>Skin</tissue>
    </source>
</reference>
<reference key="5">
    <citation type="submission" date="1998-11" db="EMBL/GenBank/DDBJ databases">
        <title>Genomic organization of human psoriasin (S100A7) gene.</title>
        <authorList>
            <person name="Glaeser R."/>
            <person name="Harder J."/>
            <person name="Christophers E."/>
            <person name="Schroeder J.M."/>
        </authorList>
    </citation>
    <scope>NUCLEOTIDE SEQUENCE [GENOMIC DNA] OF 1-89</scope>
    <scope>VARIANT ASP-28</scope>
</reference>
<reference key="6">
    <citation type="journal article" date="1995" name="Biochem. Biophys. Res. Commun.">
        <title>Amino acid sequence analysis of human S100A7 (psoriasin) by tandem mass spectrometry.</title>
        <authorList>
            <person name="Burgisser D.M."/>
            <person name="Siegenthaler G."/>
            <person name="Kuster T."/>
            <person name="Hellman U."/>
            <person name="Hunziker P."/>
            <person name="Birchler N."/>
            <person name="Heizmann C.W."/>
        </authorList>
    </citation>
    <scope>PROTEIN SEQUENCE OF 2-101</scope>
    <scope>MASS SPECTROMETRY</scope>
    <scope>ACETYLATION AT SER-2</scope>
    <source>
        <tissue>Psoriatic skin</tissue>
    </source>
</reference>
<reference key="7">
    <citation type="journal article" date="1992" name="Electrophoresis">
        <title>Microsequences of 145 proteins recorded in the two-dimensional gel protein database of normal human epidermal keratinocytes.</title>
        <authorList>
            <person name="Rasmussen H.H."/>
            <person name="van Damme J."/>
            <person name="Puype M."/>
            <person name="Gesser B."/>
            <person name="Celis J.E."/>
            <person name="Vandekerckhove J."/>
        </authorList>
    </citation>
    <scope>PROTEIN SEQUENCE OF 9-19; 38-48; 50-61; 69-87 AND 89-101</scope>
    <source>
        <tissue>Keratinocyte</tissue>
    </source>
</reference>
<reference key="8">
    <citation type="journal article" date="1996" name="J. Urol.">
        <title>Bladder squamous cell carcinomas express psoriasin and externalize it to the urine.</title>
        <authorList>
            <person name="Celis J.E."/>
            <person name="Rasmussen H.H."/>
            <person name="Vorum H."/>
            <person name="Madsen P."/>
            <person name="Honore B."/>
            <person name="Wolf H."/>
            <person name="Orntoft T.F."/>
        </authorList>
    </citation>
    <scope>TISSUE SPECIFICITY</scope>
    <scope>SUBCELLULAR LOCATION</scope>
</reference>
<reference key="9">
    <citation type="journal article" date="2002" name="BMC Cancer">
        <title>RanBPM interacts with psoriasin in vitro and their expression correlates with specific clinical features in vivo in breast cancer.</title>
        <authorList>
            <person name="Emberley E.D."/>
            <person name="Gietz R.D."/>
            <person name="Campbell J.D."/>
            <person name="Hayglass K.T."/>
            <person name="Murphy L.C."/>
            <person name="Watson P.H."/>
        </authorList>
    </citation>
    <scope>INTERACTION WITH RANBP9</scope>
</reference>
<reference key="10">
    <citation type="journal article" date="2003" name="J. Mol. Evol.">
        <title>Genomic and phylogenetic analysis of the S100A7 (psoriasin) gene duplications within the region of the S100 gene cluster on human chromosome 1q21.</title>
        <authorList>
            <person name="Kulski J.K."/>
            <person name="Lim C.P."/>
            <person name="Dunn D.S."/>
            <person name="Bellgard M."/>
        </authorList>
    </citation>
    <scope>GENOMIC ORGANIZATION</scope>
</reference>
<reference key="11">
    <citation type="journal article" date="2011" name="BMC Syst. Biol.">
        <title>Initial characterization of the human central proteome.</title>
        <authorList>
            <person name="Burkard T.R."/>
            <person name="Planyavsky M."/>
            <person name="Kaupe I."/>
            <person name="Breitwieser F.P."/>
            <person name="Buerckstuemmer T."/>
            <person name="Bennett K.L."/>
            <person name="Superti-Furga G."/>
            <person name="Colinge J."/>
        </authorList>
    </citation>
    <scope>IDENTIFICATION BY MASS SPECTROMETRY [LARGE SCALE ANALYSIS]</scope>
</reference>
<reference key="12">
    <citation type="journal article" date="1998" name="Structure">
        <title>EF-hands at atomic resolution: the structure of human psoriasin (S100A7) solved by MAD phasing.</title>
        <authorList>
            <person name="Brodersen D.E."/>
            <person name="Etzerodt M."/>
            <person name="Madsen P."/>
            <person name="Celis J.E."/>
            <person name="Thoegersen H.C."/>
            <person name="Nyborg J."/>
            <person name="Kjeldgaard M."/>
        </authorList>
    </citation>
    <scope>X-RAY CRYSTALLOGRAPHY (1.05 ANGSTROMS)</scope>
</reference>
<reference key="13">
    <citation type="journal article" date="1999" name="Biochemistry">
        <title>Zinc-binding site of an S100 protein revealed. Two crystal structures of Ca2+-bound human psoriasin (S100A7) in the Zn2+-loaded and Zn2+-free states.</title>
        <authorList>
            <person name="Brodersen D.E."/>
            <person name="Nyborg J."/>
            <person name="Kjeldgaard M."/>
        </authorList>
    </citation>
    <scope>X-RAY CRYSTALLOGRAPHY (2.05 ANGSTROMS)</scope>
</reference>
<name>S10A7_HUMAN</name>
<gene>
    <name type="primary">S100A7</name>
    <name type="synonym">PSOR1</name>
    <name type="synonym">S100A7C</name>
</gene>
<dbReference type="EMBL" id="M86757">
    <property type="protein sequence ID" value="AAA60210.1"/>
    <property type="molecule type" value="mRNA"/>
</dbReference>
<dbReference type="EMBL" id="CR542164">
    <property type="protein sequence ID" value="CAG46961.1"/>
    <property type="molecule type" value="mRNA"/>
</dbReference>
<dbReference type="EMBL" id="AL591704">
    <property type="status" value="NOT_ANNOTATED_CDS"/>
    <property type="molecule type" value="Genomic_DNA"/>
</dbReference>
<dbReference type="EMBL" id="BC034687">
    <property type="protein sequence ID" value="AAH34687.1"/>
    <property type="molecule type" value="mRNA"/>
</dbReference>
<dbReference type="EMBL" id="AJ012825">
    <property type="protein sequence ID" value="CAC20409.1"/>
    <property type="molecule type" value="Genomic_DNA"/>
</dbReference>
<dbReference type="EMBL" id="BR000043">
    <property type="protein sequence ID" value="FAA00017.1"/>
    <property type="molecule type" value="Genomic_DNA"/>
</dbReference>
<dbReference type="CCDS" id="CCDS1039.1"/>
<dbReference type="PIR" id="A54327">
    <property type="entry name" value="A54327"/>
</dbReference>
<dbReference type="RefSeq" id="NP_002954.2">
    <property type="nucleotide sequence ID" value="NM_002963.4"/>
</dbReference>
<dbReference type="PDB" id="1PSR">
    <property type="method" value="X-ray"/>
    <property type="resolution" value="1.05 A"/>
    <property type="chains" value="A/B=2-101"/>
</dbReference>
<dbReference type="PDB" id="2PSR">
    <property type="method" value="X-ray"/>
    <property type="resolution" value="2.05 A"/>
    <property type="chains" value="A=2-101"/>
</dbReference>
<dbReference type="PDB" id="2WND">
    <property type="method" value="X-ray"/>
    <property type="resolution" value="1.60 A"/>
    <property type="chains" value="A=2-97"/>
</dbReference>
<dbReference type="PDB" id="2WOR">
    <property type="method" value="X-ray"/>
    <property type="resolution" value="1.70 A"/>
    <property type="chains" value="A=2-101"/>
</dbReference>
<dbReference type="PDB" id="2WOS">
    <property type="method" value="X-ray"/>
    <property type="resolution" value="1.70 A"/>
    <property type="chains" value="A=2-101"/>
</dbReference>
<dbReference type="PDB" id="3PSR">
    <property type="method" value="X-ray"/>
    <property type="resolution" value="2.50 A"/>
    <property type="chains" value="A/B=2-101"/>
</dbReference>
<dbReference type="PDB" id="4AQJ">
    <property type="method" value="X-ray"/>
    <property type="resolution" value="1.60 A"/>
    <property type="chains" value="A=1-101"/>
</dbReference>
<dbReference type="PDBsum" id="1PSR"/>
<dbReference type="PDBsum" id="2PSR"/>
<dbReference type="PDBsum" id="2WND"/>
<dbReference type="PDBsum" id="2WOR"/>
<dbReference type="PDBsum" id="2WOS"/>
<dbReference type="PDBsum" id="3PSR"/>
<dbReference type="PDBsum" id="4AQJ"/>
<dbReference type="SMR" id="P31151"/>
<dbReference type="BioGRID" id="112186">
    <property type="interactions" value="217"/>
</dbReference>
<dbReference type="FunCoup" id="P31151">
    <property type="interactions" value="771"/>
</dbReference>
<dbReference type="IntAct" id="P31151">
    <property type="interactions" value="117"/>
</dbReference>
<dbReference type="MINT" id="P31151"/>
<dbReference type="STRING" id="9606.ENSP00000357711"/>
<dbReference type="DrugBank" id="DB04474">
    <property type="generic name" value="8-anilinonaphthalene-1-sulfonic acid"/>
</dbReference>
<dbReference type="DrugBank" id="DB09213">
    <property type="generic name" value="Dexibuprofen"/>
</dbReference>
<dbReference type="DrugBank" id="DB01050">
    <property type="generic name" value="Ibuprofen"/>
</dbReference>
<dbReference type="DrugBank" id="DB01593">
    <property type="generic name" value="Zinc"/>
</dbReference>
<dbReference type="DrugBank" id="DB14487">
    <property type="generic name" value="Zinc acetate"/>
</dbReference>
<dbReference type="DrugBank" id="DB14533">
    <property type="generic name" value="Zinc chloride"/>
</dbReference>
<dbReference type="DrugBank" id="DB14548">
    <property type="generic name" value="Zinc sulfate, unspecified form"/>
</dbReference>
<dbReference type="GlyGen" id="P31151">
    <property type="glycosylation" value="1 site, 1 O-linked glycan (1 site)"/>
</dbReference>
<dbReference type="iPTMnet" id="P31151"/>
<dbReference type="PhosphoSitePlus" id="P31151"/>
<dbReference type="SwissPalm" id="P31151"/>
<dbReference type="BioMuta" id="S100A7"/>
<dbReference type="DMDM" id="172046820"/>
<dbReference type="jPOST" id="P31151"/>
<dbReference type="MassIVE" id="P31151"/>
<dbReference type="PaxDb" id="9606-ENSP00000357712"/>
<dbReference type="PeptideAtlas" id="P31151"/>
<dbReference type="PRIDE" id="P31151"/>
<dbReference type="ProteomicsDB" id="54761"/>
<dbReference type="Pumba" id="P31151"/>
<dbReference type="TopDownProteomics" id="P31151"/>
<dbReference type="Antibodypedia" id="1683">
    <property type="antibodies" value="586 antibodies from 41 providers"/>
</dbReference>
<dbReference type="CPTC" id="P31151">
    <property type="antibodies" value="1 antibody"/>
</dbReference>
<dbReference type="DNASU" id="6278"/>
<dbReference type="Ensembl" id="ENST00000368722.5">
    <property type="protein sequence ID" value="ENSP00000357711.1"/>
    <property type="gene ID" value="ENSG00000143556.9"/>
</dbReference>
<dbReference type="Ensembl" id="ENST00000368723.4">
    <property type="protein sequence ID" value="ENSP00000357712.3"/>
    <property type="gene ID" value="ENSG00000143556.9"/>
</dbReference>
<dbReference type="GeneID" id="6278"/>
<dbReference type="KEGG" id="hsa:6278"/>
<dbReference type="MANE-Select" id="ENST00000368723.4">
    <property type="protein sequence ID" value="ENSP00000357712.3"/>
    <property type="RefSeq nucleotide sequence ID" value="NM_002963.4"/>
    <property type="RefSeq protein sequence ID" value="NP_002954.2"/>
</dbReference>
<dbReference type="UCSC" id="uc001fbv.2">
    <property type="organism name" value="human"/>
</dbReference>
<dbReference type="AGR" id="HGNC:10497"/>
<dbReference type="CTD" id="6278"/>
<dbReference type="DisGeNET" id="6278"/>
<dbReference type="GeneCards" id="S100A7"/>
<dbReference type="HGNC" id="HGNC:10497">
    <property type="gene designation" value="S100A7"/>
</dbReference>
<dbReference type="HPA" id="ENSG00000143556">
    <property type="expression patterns" value="Group enriched (esophagus, lymphoid tissue, skin, vagina)"/>
</dbReference>
<dbReference type="MIM" id="600353">
    <property type="type" value="gene"/>
</dbReference>
<dbReference type="neXtProt" id="NX_P31151"/>
<dbReference type="OpenTargets" id="ENSG00000143556"/>
<dbReference type="PharmGKB" id="PA34909"/>
<dbReference type="VEuPathDB" id="HostDB:ENSG00000143556"/>
<dbReference type="eggNOG" id="ENOG502SZJ5">
    <property type="taxonomic scope" value="Eukaryota"/>
</dbReference>
<dbReference type="GeneTree" id="ENSGT00940000163488"/>
<dbReference type="HOGENOM" id="CLU_138624_5_0_1"/>
<dbReference type="InParanoid" id="P31151"/>
<dbReference type="OMA" id="FHNDTRH"/>
<dbReference type="OrthoDB" id="9450914at2759"/>
<dbReference type="PAN-GO" id="P31151">
    <property type="GO annotations" value="3 GO annotations based on evolutionary models"/>
</dbReference>
<dbReference type="PhylomeDB" id="P31151"/>
<dbReference type="TreeFam" id="TF341148"/>
<dbReference type="PathwayCommons" id="P31151"/>
<dbReference type="Reactome" id="R-HSA-6798695">
    <property type="pathway name" value="Neutrophil degranulation"/>
</dbReference>
<dbReference type="Reactome" id="R-HSA-6799990">
    <property type="pathway name" value="Metal sequestration by antimicrobial proteins"/>
</dbReference>
<dbReference type="SignaLink" id="P31151"/>
<dbReference type="BioGRID-ORCS" id="6278">
    <property type="hits" value="9 hits in 1077 CRISPR screens"/>
</dbReference>
<dbReference type="CD-CODE" id="232F8A39">
    <property type="entry name" value="P-body"/>
</dbReference>
<dbReference type="EvolutionaryTrace" id="P31151"/>
<dbReference type="GeneWiki" id="S100A7"/>
<dbReference type="GenomeRNAi" id="6278"/>
<dbReference type="Pharos" id="P31151">
    <property type="development level" value="Tbio"/>
</dbReference>
<dbReference type="PRO" id="PR:P31151"/>
<dbReference type="Proteomes" id="UP000005640">
    <property type="component" value="Chromosome 1"/>
</dbReference>
<dbReference type="RNAct" id="P31151">
    <property type="molecule type" value="protein"/>
</dbReference>
<dbReference type="Bgee" id="ENSG00000143556">
    <property type="expression patterns" value="Expressed in skin of abdomen and 91 other cell types or tissues"/>
</dbReference>
<dbReference type="GO" id="GO:0035578">
    <property type="term" value="C:azurophil granule lumen"/>
    <property type="evidence" value="ECO:0000304"/>
    <property type="project" value="Reactome"/>
</dbReference>
<dbReference type="GO" id="GO:0062023">
    <property type="term" value="C:collagen-containing extracellular matrix"/>
    <property type="evidence" value="ECO:0007005"/>
    <property type="project" value="BHF-UCL"/>
</dbReference>
<dbReference type="GO" id="GO:0005737">
    <property type="term" value="C:cytoplasm"/>
    <property type="evidence" value="ECO:0000314"/>
    <property type="project" value="UniProtKB"/>
</dbReference>
<dbReference type="GO" id="GO:0005829">
    <property type="term" value="C:cytosol"/>
    <property type="evidence" value="ECO:0000314"/>
    <property type="project" value="UniProtKB"/>
</dbReference>
<dbReference type="GO" id="GO:0005783">
    <property type="term" value="C:endoplasmic reticulum"/>
    <property type="evidence" value="ECO:0000314"/>
    <property type="project" value="UniProtKB"/>
</dbReference>
<dbReference type="GO" id="GO:0005576">
    <property type="term" value="C:extracellular region"/>
    <property type="evidence" value="ECO:0000314"/>
    <property type="project" value="UniProtKB"/>
</dbReference>
<dbReference type="GO" id="GO:0005615">
    <property type="term" value="C:extracellular space"/>
    <property type="evidence" value="ECO:0000314"/>
    <property type="project" value="UniProtKB"/>
</dbReference>
<dbReference type="GO" id="GO:0005925">
    <property type="term" value="C:focal adhesion"/>
    <property type="evidence" value="ECO:0000303"/>
    <property type="project" value="UniProtKB"/>
</dbReference>
<dbReference type="GO" id="GO:0005634">
    <property type="term" value="C:nucleus"/>
    <property type="evidence" value="ECO:0000314"/>
    <property type="project" value="UniProtKB"/>
</dbReference>
<dbReference type="GO" id="GO:0005509">
    <property type="term" value="F:calcium ion binding"/>
    <property type="evidence" value="ECO:0000314"/>
    <property type="project" value="UniProtKB"/>
</dbReference>
<dbReference type="GO" id="GO:0048306">
    <property type="term" value="F:calcium-dependent protein binding"/>
    <property type="evidence" value="ECO:0000318"/>
    <property type="project" value="GO_Central"/>
</dbReference>
<dbReference type="GO" id="GO:0050786">
    <property type="term" value="F:RAGE receptor binding"/>
    <property type="evidence" value="ECO:0000353"/>
    <property type="project" value="UniProtKB"/>
</dbReference>
<dbReference type="GO" id="GO:0008270">
    <property type="term" value="F:zinc ion binding"/>
    <property type="evidence" value="ECO:0000303"/>
    <property type="project" value="UniProtKB"/>
</dbReference>
<dbReference type="GO" id="GO:0140486">
    <property type="term" value="F:zinc ion sequestering activity"/>
    <property type="evidence" value="ECO:0000314"/>
    <property type="project" value="UniProtKB"/>
</dbReference>
<dbReference type="GO" id="GO:0001525">
    <property type="term" value="P:angiogenesis"/>
    <property type="evidence" value="ECO:0000303"/>
    <property type="project" value="UniProtKB"/>
</dbReference>
<dbReference type="GO" id="GO:0061844">
    <property type="term" value="P:antimicrobial humoral immune response mediated by antimicrobial peptide"/>
    <property type="evidence" value="ECO:0000315"/>
    <property type="project" value="UniProtKB"/>
</dbReference>
<dbReference type="GO" id="GO:0043542">
    <property type="term" value="P:endothelial cell migration"/>
    <property type="evidence" value="ECO:0000318"/>
    <property type="project" value="GO_Central"/>
</dbReference>
<dbReference type="GO" id="GO:0008544">
    <property type="term" value="P:epidermis development"/>
    <property type="evidence" value="ECO:0000304"/>
    <property type="project" value="ProtInc"/>
</dbReference>
<dbReference type="GO" id="GO:0030216">
    <property type="term" value="P:keratinocyte differentiation"/>
    <property type="evidence" value="ECO:0000303"/>
    <property type="project" value="UniProtKB"/>
</dbReference>
<dbReference type="GO" id="GO:0070374">
    <property type="term" value="P:positive regulation of ERK1 and ERK2 cascade"/>
    <property type="evidence" value="ECO:0000314"/>
    <property type="project" value="UniProtKB"/>
</dbReference>
<dbReference type="GO" id="GO:0071624">
    <property type="term" value="P:positive regulation of granulocyte chemotaxis"/>
    <property type="evidence" value="ECO:0000314"/>
    <property type="project" value="UniProtKB"/>
</dbReference>
<dbReference type="GO" id="GO:0090026">
    <property type="term" value="P:positive regulation of monocyte chemotaxis"/>
    <property type="evidence" value="ECO:0000314"/>
    <property type="project" value="UniProtKB"/>
</dbReference>
<dbReference type="GO" id="GO:0010820">
    <property type="term" value="P:positive regulation of T cell chemotaxis"/>
    <property type="evidence" value="ECO:0000314"/>
    <property type="project" value="UniProtKB"/>
</dbReference>
<dbReference type="GO" id="GO:0032496">
    <property type="term" value="P:response to lipopolysaccharide"/>
    <property type="evidence" value="ECO:0000270"/>
    <property type="project" value="UniProtKB"/>
</dbReference>
<dbReference type="GO" id="GO:0000302">
    <property type="term" value="P:response to reactive oxygen species"/>
    <property type="evidence" value="ECO:0000314"/>
    <property type="project" value="UniProtKB"/>
</dbReference>
<dbReference type="CDD" id="cd00213">
    <property type="entry name" value="S-100"/>
    <property type="match status" value="1"/>
</dbReference>
<dbReference type="FunFam" id="1.10.238.10:FF:000296">
    <property type="entry name" value="Protein S100"/>
    <property type="match status" value="1"/>
</dbReference>
<dbReference type="Gene3D" id="1.10.238.10">
    <property type="entry name" value="EF-hand"/>
    <property type="match status" value="1"/>
</dbReference>
<dbReference type="InterPro" id="IPR011992">
    <property type="entry name" value="EF-hand-dom_pair"/>
</dbReference>
<dbReference type="InterPro" id="IPR018247">
    <property type="entry name" value="EF_Hand_1_Ca_BS"/>
</dbReference>
<dbReference type="InterPro" id="IPR002048">
    <property type="entry name" value="EF_hand_dom"/>
</dbReference>
<dbReference type="InterPro" id="IPR034325">
    <property type="entry name" value="S-100_dom"/>
</dbReference>
<dbReference type="InterPro" id="IPR001751">
    <property type="entry name" value="S100/CaBP7/8-like_CS"/>
</dbReference>
<dbReference type="InterPro" id="IPR013787">
    <property type="entry name" value="S100_Ca-bd_sub"/>
</dbReference>
<dbReference type="PANTHER" id="PTHR11639:SF128">
    <property type="entry name" value="PROTEIN S100-A7"/>
    <property type="match status" value="1"/>
</dbReference>
<dbReference type="PANTHER" id="PTHR11639">
    <property type="entry name" value="S100 CALCIUM-BINDING PROTEIN"/>
    <property type="match status" value="1"/>
</dbReference>
<dbReference type="Pfam" id="PF01023">
    <property type="entry name" value="S_100"/>
    <property type="match status" value="1"/>
</dbReference>
<dbReference type="SMART" id="SM01394">
    <property type="entry name" value="S_100"/>
    <property type="match status" value="1"/>
</dbReference>
<dbReference type="SUPFAM" id="SSF47473">
    <property type="entry name" value="EF-hand"/>
    <property type="match status" value="1"/>
</dbReference>
<dbReference type="PROSITE" id="PS00018">
    <property type="entry name" value="EF_HAND_1"/>
    <property type="match status" value="1"/>
</dbReference>
<dbReference type="PROSITE" id="PS50222">
    <property type="entry name" value="EF_HAND_2"/>
    <property type="match status" value="1"/>
</dbReference>
<dbReference type="PROSITE" id="PS00303">
    <property type="entry name" value="S100_CABP"/>
    <property type="match status" value="1"/>
</dbReference>
<sequence length="101" mass="11471">MSNTQAERSIIGMIDMFHKYTRRDDKIEKPSLLTMMKENFPNFLSACDKKGTNYLADVFEKKDKNEDKKIDFSEFLSLLGDIATDYHKQSHGAAPCSGGSQ</sequence>
<feature type="initiator methionine" description="Removed" evidence="5">
    <location>
        <position position="1"/>
    </location>
</feature>
<feature type="chain" id="PRO_0000143990" description="Protein S100-A7">
    <location>
        <begin position="2"/>
        <end position="101"/>
    </location>
</feature>
<feature type="domain" description="EF-hand 1" evidence="9">
    <location>
        <begin position="13"/>
        <end position="48"/>
    </location>
</feature>
<feature type="domain" description="EF-hand 2" evidence="1">
    <location>
        <begin position="50"/>
        <end position="85"/>
    </location>
</feature>
<feature type="binding site">
    <location>
        <position position="18"/>
    </location>
    <ligand>
        <name>Zn(2+)</name>
        <dbReference type="ChEBI" id="CHEBI:29105"/>
    </ligand>
</feature>
<feature type="binding site">
    <location>
        <position position="25"/>
    </location>
    <ligand>
        <name>Zn(2+)</name>
        <dbReference type="ChEBI" id="CHEBI:29105"/>
    </ligand>
</feature>
<feature type="binding site" evidence="1">
    <location>
        <position position="63"/>
    </location>
    <ligand>
        <name>Ca(2+)</name>
        <dbReference type="ChEBI" id="CHEBI:29108"/>
        <note>high affinity</note>
    </ligand>
</feature>
<feature type="binding site" evidence="1">
    <location>
        <position position="65"/>
    </location>
    <ligand>
        <name>Ca(2+)</name>
        <dbReference type="ChEBI" id="CHEBI:29108"/>
        <note>high affinity</note>
    </ligand>
</feature>
<feature type="binding site" evidence="1">
    <location>
        <position position="67"/>
    </location>
    <ligand>
        <name>Ca(2+)</name>
        <dbReference type="ChEBI" id="CHEBI:29108"/>
        <note>high affinity</note>
    </ligand>
</feature>
<feature type="binding site" evidence="1">
    <location>
        <position position="69"/>
    </location>
    <ligand>
        <name>Ca(2+)</name>
        <dbReference type="ChEBI" id="CHEBI:29108"/>
        <note>high affinity</note>
    </ligand>
</feature>
<feature type="binding site" evidence="1">
    <location>
        <position position="74"/>
    </location>
    <ligand>
        <name>Ca(2+)</name>
        <dbReference type="ChEBI" id="CHEBI:29108"/>
        <note>high affinity</note>
    </ligand>
</feature>
<feature type="binding site">
    <location>
        <position position="87"/>
    </location>
    <ligand>
        <name>Zn(2+)</name>
        <dbReference type="ChEBI" id="CHEBI:29105"/>
    </ligand>
</feature>
<feature type="binding site">
    <location>
        <position position="91"/>
    </location>
    <ligand>
        <name>Zn(2+)</name>
        <dbReference type="ChEBI" id="CHEBI:29105"/>
    </ligand>
</feature>
<feature type="modified residue" description="N-acetylserine" evidence="5">
    <location>
        <position position="2"/>
    </location>
</feature>
<feature type="disulfide bond">
    <location>
        <begin position="47"/>
        <end position="96"/>
    </location>
</feature>
<feature type="sequence variant" id="VAR_039118" description="In dbSNP:rs3014837." evidence="3 4 7 8">
    <original>E</original>
    <variation>D</variation>
    <location>
        <position position="28"/>
    </location>
</feature>
<feature type="helix" evidence="10">
    <location>
        <begin position="5"/>
        <end position="19"/>
    </location>
</feature>
<feature type="helix" evidence="10">
    <location>
        <begin position="29"/>
        <end position="39"/>
    </location>
</feature>
<feature type="helix" evidence="10">
    <location>
        <begin position="41"/>
        <end position="49"/>
    </location>
</feature>
<feature type="helix" evidence="10">
    <location>
        <begin position="54"/>
        <end position="56"/>
    </location>
</feature>
<feature type="helix" evidence="10">
    <location>
        <begin position="58"/>
        <end position="62"/>
    </location>
</feature>
<feature type="strand" evidence="11">
    <location>
        <begin position="67"/>
        <end position="70"/>
    </location>
</feature>
<feature type="helix" evidence="10">
    <location>
        <begin position="72"/>
        <end position="89"/>
    </location>
</feature>
<feature type="turn" evidence="10">
    <location>
        <begin position="90"/>
        <end position="92"/>
    </location>
</feature>
<comment type="subunit">
    <text evidence="2">Interacts with RANBP9.</text>
</comment>
<comment type="interaction">
    <interactant intactId="EBI-357520">
        <id>P31151</id>
    </interactant>
    <interactant intactId="EBI-12357161">
        <id>Q5SYC1</id>
        <label>CLVS2</label>
    </interactant>
    <organismsDiffer>false</organismsDiffer>
    <experiments>3</experiments>
</comment>
<comment type="interaction">
    <interactant intactId="EBI-357520">
        <id>P31151</id>
    </interactant>
    <interactant intactId="EBI-636085">
        <id>Q96S59</id>
        <label>RANBP9</label>
    </interactant>
    <organismsDiffer>false</organismsDiffer>
    <experiments>3</experiments>
</comment>
<comment type="interaction">
    <interactant intactId="EBI-357520">
        <id>P31151</id>
    </interactant>
    <interactant intactId="EBI-12006206">
        <id>Q5SY68</id>
        <label>S100A7L2</label>
    </interactant>
    <organismsDiffer>false</organismsDiffer>
    <experiments>10</experiments>
</comment>
<comment type="subcellular location">
    <subcellularLocation>
        <location evidence="6">Cytoplasm</location>
    </subcellularLocation>
    <subcellularLocation>
        <location evidence="6">Secreted</location>
    </subcellularLocation>
    <text>Secreted by a non-classical secretory pathway.</text>
</comment>
<comment type="tissue specificity">
    <text evidence="6">Fetal ear, skin, and tongue and human cell lines. Highly up-regulated in psoriatic epidermis. Also highly expressed in the urine of bladder squamous cell carcinoma (SCC) bearing patients.</text>
</comment>
<comment type="mass spectrometry" mass="11365.0" error="0.7" method="Electrospray" evidence="5"/>
<comment type="similarity">
    <text evidence="9">Belongs to the S-100 family.</text>
</comment>
<comment type="online information" name="Atlas of Genetics and Cytogenetics in Oncology and Haematology">
    <link uri="https://atlasgeneticsoncology.org/gene/42194/S100A7"/>
</comment>
<accession>P31151</accession>
<accession>Q5SY67</accession>
<accession>Q6FGE3</accession>
<accession>Q9H1E2</accession>